<sequence length="275" mass="30688">MNTSHYSVLGHAVPYPKAYDPSLLFPISRAVGRAQIGIGVVLPFVGEDRWHAYELSWLDARGKPCVATATFHVPCDSPYLIESKSLKLYLNSFSAEVFNRAEALRLRIAADLSACAGAAVAVEFGLPPVGGGDKEISLDRLNVDIEDYGPPNPDYLSNVAQNLIEEMVEETLTSTLFKSNCPVTGQPDWASVTVRYFGVPIDHEGLLRYFISFRHHAEFHEQCVERIFQDVLQRCSPQCLAVEARYTRRGGLDINPLRTTSEMAWPISVFRDPRQ</sequence>
<keyword id="KW-0963">Cytoplasm</keyword>
<keyword id="KW-0521">NADP</keyword>
<keyword id="KW-0560">Oxidoreductase</keyword>
<keyword id="KW-0671">Queuosine biosynthesis</keyword>
<feature type="chain" id="PRO_0000163071" description="NADPH-dependent 7-cyano-7-deazaguanine reductase">
    <location>
        <begin position="1"/>
        <end position="275"/>
    </location>
</feature>
<feature type="active site" description="Thioimide intermediate" evidence="1">
    <location>
        <position position="181"/>
    </location>
</feature>
<feature type="active site" description="Proton donor" evidence="1">
    <location>
        <position position="188"/>
    </location>
</feature>
<feature type="binding site" evidence="1">
    <location>
        <begin position="81"/>
        <end position="83"/>
    </location>
    <ligand>
        <name>substrate</name>
    </ligand>
</feature>
<feature type="binding site" evidence="1">
    <location>
        <begin position="83"/>
        <end position="84"/>
    </location>
    <ligand>
        <name>NADPH</name>
        <dbReference type="ChEBI" id="CHEBI:57783"/>
    </ligand>
</feature>
<feature type="binding site" evidence="1">
    <location>
        <begin position="220"/>
        <end position="221"/>
    </location>
    <ligand>
        <name>substrate</name>
    </ligand>
</feature>
<feature type="binding site" evidence="1">
    <location>
        <begin position="249"/>
        <end position="250"/>
    </location>
    <ligand>
        <name>NADPH</name>
        <dbReference type="ChEBI" id="CHEBI:57783"/>
    </ligand>
</feature>
<comment type="function">
    <text evidence="1">Catalyzes the NADPH-dependent reduction of 7-cyano-7-deazaguanine (preQ0) to 7-aminomethyl-7-deazaguanine (preQ1).</text>
</comment>
<comment type="catalytic activity">
    <reaction evidence="1">
        <text>7-aminomethyl-7-carbaguanine + 2 NADP(+) = 7-cyano-7-deazaguanine + 2 NADPH + 3 H(+)</text>
        <dbReference type="Rhea" id="RHEA:13409"/>
        <dbReference type="ChEBI" id="CHEBI:15378"/>
        <dbReference type="ChEBI" id="CHEBI:45075"/>
        <dbReference type="ChEBI" id="CHEBI:57783"/>
        <dbReference type="ChEBI" id="CHEBI:58349"/>
        <dbReference type="ChEBI" id="CHEBI:58703"/>
        <dbReference type="EC" id="1.7.1.13"/>
    </reaction>
</comment>
<comment type="pathway">
    <text evidence="1">tRNA modification; tRNA-queuosine biosynthesis.</text>
</comment>
<comment type="subunit">
    <text evidence="1">Homodimer.</text>
</comment>
<comment type="subcellular location">
    <subcellularLocation>
        <location evidence="1">Cytoplasm</location>
    </subcellularLocation>
</comment>
<comment type="similarity">
    <text evidence="1">Belongs to the GTP cyclohydrolase I family. QueF type 2 subfamily.</text>
</comment>
<accession>Q9PAW2</accession>
<dbReference type="EC" id="1.7.1.13" evidence="1"/>
<dbReference type="EMBL" id="AE003849">
    <property type="protein sequence ID" value="AAF85182.1"/>
    <property type="molecule type" value="Genomic_DNA"/>
</dbReference>
<dbReference type="PIR" id="H82565">
    <property type="entry name" value="H82565"/>
</dbReference>
<dbReference type="RefSeq" id="WP_010894829.1">
    <property type="nucleotide sequence ID" value="NC_002488.3"/>
</dbReference>
<dbReference type="SMR" id="Q9PAW2"/>
<dbReference type="STRING" id="160492.XF_2383"/>
<dbReference type="KEGG" id="xfa:XF_2383"/>
<dbReference type="eggNOG" id="COG0780">
    <property type="taxonomic scope" value="Bacteria"/>
</dbReference>
<dbReference type="eggNOG" id="COG2904">
    <property type="taxonomic scope" value="Bacteria"/>
</dbReference>
<dbReference type="HOGENOM" id="CLU_054738_0_0_6"/>
<dbReference type="UniPathway" id="UPA00392"/>
<dbReference type="Proteomes" id="UP000000812">
    <property type="component" value="Chromosome"/>
</dbReference>
<dbReference type="GO" id="GO:0005737">
    <property type="term" value="C:cytoplasm"/>
    <property type="evidence" value="ECO:0007669"/>
    <property type="project" value="UniProtKB-SubCell"/>
</dbReference>
<dbReference type="GO" id="GO:0033739">
    <property type="term" value="F:preQ1 synthase activity"/>
    <property type="evidence" value="ECO:0007669"/>
    <property type="project" value="UniProtKB-UniRule"/>
</dbReference>
<dbReference type="GO" id="GO:0008616">
    <property type="term" value="P:queuosine biosynthetic process"/>
    <property type="evidence" value="ECO:0007669"/>
    <property type="project" value="UniProtKB-UniRule"/>
</dbReference>
<dbReference type="GO" id="GO:0006400">
    <property type="term" value="P:tRNA modification"/>
    <property type="evidence" value="ECO:0007669"/>
    <property type="project" value="UniProtKB-UniRule"/>
</dbReference>
<dbReference type="Gene3D" id="3.30.1130.10">
    <property type="match status" value="2"/>
</dbReference>
<dbReference type="HAMAP" id="MF_00817">
    <property type="entry name" value="QueF_type2"/>
    <property type="match status" value="1"/>
</dbReference>
<dbReference type="InterPro" id="IPR043133">
    <property type="entry name" value="GTP-CH-I_C/QueF"/>
</dbReference>
<dbReference type="InterPro" id="IPR050084">
    <property type="entry name" value="NADPH_dep_7-cyano-7-deazaG_red"/>
</dbReference>
<dbReference type="InterPro" id="IPR029500">
    <property type="entry name" value="QueF"/>
</dbReference>
<dbReference type="InterPro" id="IPR029139">
    <property type="entry name" value="QueF_N"/>
</dbReference>
<dbReference type="InterPro" id="IPR016428">
    <property type="entry name" value="QueF_type2"/>
</dbReference>
<dbReference type="NCBIfam" id="TIGR03138">
    <property type="entry name" value="QueF"/>
    <property type="match status" value="1"/>
</dbReference>
<dbReference type="PANTHER" id="PTHR34354">
    <property type="entry name" value="NADPH-DEPENDENT 7-CYANO-7-DEAZAGUANINE REDUCTASE"/>
    <property type="match status" value="1"/>
</dbReference>
<dbReference type="PANTHER" id="PTHR34354:SF1">
    <property type="entry name" value="NADPH-DEPENDENT 7-CYANO-7-DEAZAGUANINE REDUCTASE"/>
    <property type="match status" value="1"/>
</dbReference>
<dbReference type="Pfam" id="PF14489">
    <property type="entry name" value="QueF"/>
    <property type="match status" value="1"/>
</dbReference>
<dbReference type="Pfam" id="PF14819">
    <property type="entry name" value="QueF_N"/>
    <property type="match status" value="1"/>
</dbReference>
<dbReference type="PIRSF" id="PIRSF004750">
    <property type="entry name" value="Nitrile_oxidored_YqcD_prd"/>
    <property type="match status" value="1"/>
</dbReference>
<dbReference type="SUPFAM" id="SSF55620">
    <property type="entry name" value="Tetrahydrobiopterin biosynthesis enzymes-like"/>
    <property type="match status" value="1"/>
</dbReference>
<protein>
    <recommendedName>
        <fullName evidence="1">NADPH-dependent 7-cyano-7-deazaguanine reductase</fullName>
        <ecNumber evidence="1">1.7.1.13</ecNumber>
    </recommendedName>
    <alternativeName>
        <fullName evidence="1">7-cyano-7-carbaguanine reductase</fullName>
    </alternativeName>
    <alternativeName>
        <fullName evidence="1">NADPH-dependent nitrile oxidoreductase</fullName>
    </alternativeName>
    <alternativeName>
        <fullName evidence="1">PreQ(0) reductase</fullName>
    </alternativeName>
</protein>
<reference key="1">
    <citation type="journal article" date="2000" name="Nature">
        <title>The genome sequence of the plant pathogen Xylella fastidiosa.</title>
        <authorList>
            <person name="Simpson A.J.G."/>
            <person name="Reinach F.C."/>
            <person name="Arruda P."/>
            <person name="Abreu F.A."/>
            <person name="Acencio M."/>
            <person name="Alvarenga R."/>
            <person name="Alves L.M.C."/>
            <person name="Araya J.E."/>
            <person name="Baia G.S."/>
            <person name="Baptista C.S."/>
            <person name="Barros M.H."/>
            <person name="Bonaccorsi E.D."/>
            <person name="Bordin S."/>
            <person name="Bove J.M."/>
            <person name="Briones M.R.S."/>
            <person name="Bueno M.R.P."/>
            <person name="Camargo A.A."/>
            <person name="Camargo L.E.A."/>
            <person name="Carraro D.M."/>
            <person name="Carrer H."/>
            <person name="Colauto N.B."/>
            <person name="Colombo C."/>
            <person name="Costa F.F."/>
            <person name="Costa M.C.R."/>
            <person name="Costa-Neto C.M."/>
            <person name="Coutinho L.L."/>
            <person name="Cristofani M."/>
            <person name="Dias-Neto E."/>
            <person name="Docena C."/>
            <person name="El-Dorry H."/>
            <person name="Facincani A.P."/>
            <person name="Ferreira A.J.S."/>
            <person name="Ferreira V.C.A."/>
            <person name="Ferro J.A."/>
            <person name="Fraga J.S."/>
            <person name="Franca S.C."/>
            <person name="Franco M.C."/>
            <person name="Frohme M."/>
            <person name="Furlan L.R."/>
            <person name="Garnier M."/>
            <person name="Goldman G.H."/>
            <person name="Goldman M.H.S."/>
            <person name="Gomes S.L."/>
            <person name="Gruber A."/>
            <person name="Ho P.L."/>
            <person name="Hoheisel J.D."/>
            <person name="Junqueira M.L."/>
            <person name="Kemper E.L."/>
            <person name="Kitajima J.P."/>
            <person name="Krieger J.E."/>
            <person name="Kuramae E.E."/>
            <person name="Laigret F."/>
            <person name="Lambais M.R."/>
            <person name="Leite L.C.C."/>
            <person name="Lemos E.G.M."/>
            <person name="Lemos M.V.F."/>
            <person name="Lopes S.A."/>
            <person name="Lopes C.R."/>
            <person name="Machado J.A."/>
            <person name="Machado M.A."/>
            <person name="Madeira A.M.B.N."/>
            <person name="Madeira H.M.F."/>
            <person name="Marino C.L."/>
            <person name="Marques M.V."/>
            <person name="Martins E.A.L."/>
            <person name="Martins E.M.F."/>
            <person name="Matsukuma A.Y."/>
            <person name="Menck C.F.M."/>
            <person name="Miracca E.C."/>
            <person name="Miyaki C.Y."/>
            <person name="Monteiro-Vitorello C.B."/>
            <person name="Moon D.H."/>
            <person name="Nagai M.A."/>
            <person name="Nascimento A.L.T.O."/>
            <person name="Netto L.E.S."/>
            <person name="Nhani A. Jr."/>
            <person name="Nobrega F.G."/>
            <person name="Nunes L.R."/>
            <person name="Oliveira M.A."/>
            <person name="de Oliveira M.C."/>
            <person name="de Oliveira R.C."/>
            <person name="Palmieri D.A."/>
            <person name="Paris A."/>
            <person name="Peixoto B.R."/>
            <person name="Pereira G.A.G."/>
            <person name="Pereira H.A. Jr."/>
            <person name="Pesquero J.B."/>
            <person name="Quaggio R.B."/>
            <person name="Roberto P.G."/>
            <person name="Rodrigues V."/>
            <person name="de Rosa A.J.M."/>
            <person name="de Rosa V.E. Jr."/>
            <person name="de Sa R.G."/>
            <person name="Santelli R.V."/>
            <person name="Sawasaki H.E."/>
            <person name="da Silva A.C.R."/>
            <person name="da Silva A.M."/>
            <person name="da Silva F.R."/>
            <person name="Silva W.A. Jr."/>
            <person name="da Silveira J.F."/>
            <person name="Silvestri M.L.Z."/>
            <person name="Siqueira W.J."/>
            <person name="de Souza A.A."/>
            <person name="de Souza A.P."/>
            <person name="Terenzi M.F."/>
            <person name="Truffi D."/>
            <person name="Tsai S.M."/>
            <person name="Tsuhako M.H."/>
            <person name="Vallada H."/>
            <person name="Van Sluys M.A."/>
            <person name="Verjovski-Almeida S."/>
            <person name="Vettore A.L."/>
            <person name="Zago M.A."/>
            <person name="Zatz M."/>
            <person name="Meidanis J."/>
            <person name="Setubal J.C."/>
        </authorList>
    </citation>
    <scope>NUCLEOTIDE SEQUENCE [LARGE SCALE GENOMIC DNA]</scope>
    <source>
        <strain>9a5c</strain>
    </source>
</reference>
<organism>
    <name type="scientific">Xylella fastidiosa (strain 9a5c)</name>
    <dbReference type="NCBI Taxonomy" id="160492"/>
    <lineage>
        <taxon>Bacteria</taxon>
        <taxon>Pseudomonadati</taxon>
        <taxon>Pseudomonadota</taxon>
        <taxon>Gammaproteobacteria</taxon>
        <taxon>Lysobacterales</taxon>
        <taxon>Lysobacteraceae</taxon>
        <taxon>Xylella</taxon>
    </lineage>
</organism>
<evidence type="ECO:0000255" key="1">
    <source>
        <dbReference type="HAMAP-Rule" id="MF_00817"/>
    </source>
</evidence>
<gene>
    <name evidence="1" type="primary">queF</name>
    <name type="ordered locus">XF_2383</name>
</gene>
<name>QUEF_XYLFA</name>
<proteinExistence type="inferred from homology"/>